<evidence type="ECO:0000255" key="1"/>
<evidence type="ECO:0000305" key="2"/>
<protein>
    <recommendedName>
        <fullName>GDT1-like protein 3</fullName>
    </recommendedName>
</protein>
<accession>Q93Y38</accession>
<accession>B9DF76</accession>
<accession>Q9FG57</accession>
<dbReference type="EMBL" id="AB026661">
    <property type="protein sequence ID" value="BAB09369.1"/>
    <property type="status" value="ALT_SEQ"/>
    <property type="molecule type" value="Genomic_DNA"/>
</dbReference>
<dbReference type="EMBL" id="CP002688">
    <property type="protein sequence ID" value="AED94065.1"/>
    <property type="molecule type" value="Genomic_DNA"/>
</dbReference>
<dbReference type="EMBL" id="CP002688">
    <property type="protein sequence ID" value="AED94066.1"/>
    <property type="molecule type" value="Genomic_DNA"/>
</dbReference>
<dbReference type="EMBL" id="AY054477">
    <property type="protein sequence ID" value="AAK96668.1"/>
    <property type="molecule type" value="mRNA"/>
</dbReference>
<dbReference type="EMBL" id="BT009678">
    <property type="protein sequence ID" value="AAP80179.1"/>
    <property type="molecule type" value="mRNA"/>
</dbReference>
<dbReference type="EMBL" id="AY085108">
    <property type="protein sequence ID" value="AAM61662.1"/>
    <property type="molecule type" value="mRNA"/>
</dbReference>
<dbReference type="EMBL" id="AK316663">
    <property type="protein sequence ID" value="BAH19393.1"/>
    <property type="molecule type" value="mRNA"/>
</dbReference>
<dbReference type="RefSeq" id="NP_568535.1">
    <property type="nucleotide sequence ID" value="NM_123020.5"/>
</dbReference>
<dbReference type="RefSeq" id="NP_851098.1">
    <property type="nucleotide sequence ID" value="NM_180767.2"/>
</dbReference>
<dbReference type="FunCoup" id="Q93Y38">
    <property type="interactions" value="3795"/>
</dbReference>
<dbReference type="STRING" id="3702.Q93Y38"/>
<dbReference type="SwissPalm" id="Q93Y38"/>
<dbReference type="PaxDb" id="3702-AT5G36290.2"/>
<dbReference type="ProteomicsDB" id="247120"/>
<dbReference type="EnsemblPlants" id="AT5G36290.1">
    <property type="protein sequence ID" value="AT5G36290.1"/>
    <property type="gene ID" value="AT5G36290"/>
</dbReference>
<dbReference type="EnsemblPlants" id="AT5G36290.2">
    <property type="protein sequence ID" value="AT5G36290.2"/>
    <property type="gene ID" value="AT5G36290"/>
</dbReference>
<dbReference type="GeneID" id="833627"/>
<dbReference type="Gramene" id="AT5G36290.1">
    <property type="protein sequence ID" value="AT5G36290.1"/>
    <property type="gene ID" value="AT5G36290"/>
</dbReference>
<dbReference type="Gramene" id="AT5G36290.2">
    <property type="protein sequence ID" value="AT5G36290.2"/>
    <property type="gene ID" value="AT5G36290"/>
</dbReference>
<dbReference type="KEGG" id="ath:AT5G36290"/>
<dbReference type="Araport" id="AT5G36290"/>
<dbReference type="TAIR" id="AT5G36290">
    <property type="gene designation" value="PML3"/>
</dbReference>
<dbReference type="eggNOG" id="KOG2881">
    <property type="taxonomic scope" value="Eukaryota"/>
</dbReference>
<dbReference type="HOGENOM" id="CLU_040186_0_1_1"/>
<dbReference type="InParanoid" id="Q93Y38"/>
<dbReference type="OMA" id="HAIACAM"/>
<dbReference type="PhylomeDB" id="Q93Y38"/>
<dbReference type="PRO" id="PR:Q93Y38"/>
<dbReference type="Proteomes" id="UP000006548">
    <property type="component" value="Chromosome 5"/>
</dbReference>
<dbReference type="ExpressionAtlas" id="Q93Y38">
    <property type="expression patterns" value="baseline and differential"/>
</dbReference>
<dbReference type="GO" id="GO:0005794">
    <property type="term" value="C:Golgi apparatus"/>
    <property type="evidence" value="ECO:0000314"/>
    <property type="project" value="TAIR"/>
</dbReference>
<dbReference type="GO" id="GO:0016020">
    <property type="term" value="C:membrane"/>
    <property type="evidence" value="ECO:0007669"/>
    <property type="project" value="UniProtKB-SubCell"/>
</dbReference>
<dbReference type="GO" id="GO:0046873">
    <property type="term" value="F:metal ion transmembrane transporter activity"/>
    <property type="evidence" value="ECO:0007669"/>
    <property type="project" value="InterPro"/>
</dbReference>
<dbReference type="InterPro" id="IPR001727">
    <property type="entry name" value="GDT1-like"/>
</dbReference>
<dbReference type="InterPro" id="IPR036259">
    <property type="entry name" value="MFS_trans_sf"/>
</dbReference>
<dbReference type="PANTHER" id="PTHR12608:SF9">
    <property type="entry name" value="GDT1-LIKE PROTEIN 3"/>
    <property type="match status" value="1"/>
</dbReference>
<dbReference type="PANTHER" id="PTHR12608">
    <property type="entry name" value="TRANSMEMBRANE PROTEIN HTP-1 RELATED"/>
    <property type="match status" value="1"/>
</dbReference>
<dbReference type="Pfam" id="PF01169">
    <property type="entry name" value="GDT1"/>
    <property type="match status" value="2"/>
</dbReference>
<dbReference type="SUPFAM" id="SSF103473">
    <property type="entry name" value="MFS general substrate transporter"/>
    <property type="match status" value="1"/>
</dbReference>
<sequence length="293" mass="31525">MGLISNPTRLILVATIFFLVSSISGQDSVVENNERQESEGSGKELGRRGMVGTERIGVDTVVDNIGALGLNLDLDATAPSVFDALFSSFSMILVTEIGDETFIIAALMAMRHPKATVLSGALSALFVMTILSTGLGRIVPNLISRKHTNSAATVLYAFFGLRLLYIAWRSTDSKSNQKKEMEEVEEKLESGQGKTPFRRLFSRFCTPIFLESFILTFLAEWGDRSQIATIALATHKNAIGVAIGASIGHTVCTSLAVVGGSMLASRISQRTVATVGGLLFLGFSVSSYFYPPL</sequence>
<feature type="signal peptide" evidence="1">
    <location>
        <begin position="1"/>
        <end position="25"/>
    </location>
</feature>
<feature type="chain" id="PRO_0000398766" description="GDT1-like protein 3">
    <location>
        <begin position="26"/>
        <end position="293"/>
    </location>
</feature>
<feature type="transmembrane region" description="Helical" evidence="1">
    <location>
        <begin position="89"/>
        <end position="109"/>
    </location>
</feature>
<feature type="transmembrane region" description="Helical" evidence="1">
    <location>
        <begin position="115"/>
        <end position="135"/>
    </location>
</feature>
<feature type="transmembrane region" description="Helical" evidence="1">
    <location>
        <begin position="148"/>
        <end position="168"/>
    </location>
</feature>
<feature type="transmembrane region" description="Helical" evidence="1">
    <location>
        <begin position="200"/>
        <end position="220"/>
    </location>
</feature>
<feature type="transmembrane region" description="Helical" evidence="1">
    <location>
        <begin position="238"/>
        <end position="258"/>
    </location>
</feature>
<feature type="transmembrane region" description="Helical" evidence="1">
    <location>
        <begin position="272"/>
        <end position="292"/>
    </location>
</feature>
<gene>
    <name type="ordered locus">At5g36290</name>
    <name type="ORF">T30G6.16</name>
</gene>
<name>GDT13_ARATH</name>
<keyword id="KW-0472">Membrane</keyword>
<keyword id="KW-1185">Reference proteome</keyword>
<keyword id="KW-0732">Signal</keyword>
<keyword id="KW-0812">Transmembrane</keyword>
<keyword id="KW-1133">Transmembrane helix</keyword>
<proteinExistence type="evidence at transcript level"/>
<reference key="1">
    <citation type="submission" date="1999-04" db="EMBL/GenBank/DDBJ databases">
        <title>Structural analysis of Arabidopsis thaliana chromosome 5. XI.</title>
        <authorList>
            <person name="Kaneko T."/>
            <person name="Katoh T."/>
            <person name="Asamizu E."/>
            <person name="Sato S."/>
            <person name="Nakamura Y."/>
            <person name="Kotani H."/>
            <person name="Tabata S."/>
        </authorList>
    </citation>
    <scope>NUCLEOTIDE SEQUENCE [LARGE SCALE GENOMIC DNA]</scope>
    <source>
        <strain>cv. Columbia</strain>
    </source>
</reference>
<reference key="2">
    <citation type="journal article" date="2017" name="Plant J.">
        <title>Araport11: a complete reannotation of the Arabidopsis thaliana reference genome.</title>
        <authorList>
            <person name="Cheng C.Y."/>
            <person name="Krishnakumar V."/>
            <person name="Chan A.P."/>
            <person name="Thibaud-Nissen F."/>
            <person name="Schobel S."/>
            <person name="Town C.D."/>
        </authorList>
    </citation>
    <scope>GENOME REANNOTATION</scope>
    <source>
        <strain>cv. Columbia</strain>
    </source>
</reference>
<reference key="3">
    <citation type="journal article" date="2003" name="Science">
        <title>Empirical analysis of transcriptional activity in the Arabidopsis genome.</title>
        <authorList>
            <person name="Yamada K."/>
            <person name="Lim J."/>
            <person name="Dale J.M."/>
            <person name="Chen H."/>
            <person name="Shinn P."/>
            <person name="Palm C.J."/>
            <person name="Southwick A.M."/>
            <person name="Wu H.C."/>
            <person name="Kim C.J."/>
            <person name="Nguyen M."/>
            <person name="Pham P.K."/>
            <person name="Cheuk R.F."/>
            <person name="Karlin-Newmann G."/>
            <person name="Liu S.X."/>
            <person name="Lam B."/>
            <person name="Sakano H."/>
            <person name="Wu T."/>
            <person name="Yu G."/>
            <person name="Miranda M."/>
            <person name="Quach H.L."/>
            <person name="Tripp M."/>
            <person name="Chang C.H."/>
            <person name="Lee J.M."/>
            <person name="Toriumi M.J."/>
            <person name="Chan M.M."/>
            <person name="Tang C.C."/>
            <person name="Onodera C.S."/>
            <person name="Deng J.M."/>
            <person name="Akiyama K."/>
            <person name="Ansari Y."/>
            <person name="Arakawa T."/>
            <person name="Banh J."/>
            <person name="Banno F."/>
            <person name="Bowser L."/>
            <person name="Brooks S.Y."/>
            <person name="Carninci P."/>
            <person name="Chao Q."/>
            <person name="Choy N."/>
            <person name="Enju A."/>
            <person name="Goldsmith A.D."/>
            <person name="Gurjal M."/>
            <person name="Hansen N.F."/>
            <person name="Hayashizaki Y."/>
            <person name="Johnson-Hopson C."/>
            <person name="Hsuan V.W."/>
            <person name="Iida K."/>
            <person name="Karnes M."/>
            <person name="Khan S."/>
            <person name="Koesema E."/>
            <person name="Ishida J."/>
            <person name="Jiang P.X."/>
            <person name="Jones T."/>
            <person name="Kawai J."/>
            <person name="Kamiya A."/>
            <person name="Meyers C."/>
            <person name="Nakajima M."/>
            <person name="Narusaka M."/>
            <person name="Seki M."/>
            <person name="Sakurai T."/>
            <person name="Satou M."/>
            <person name="Tamse R."/>
            <person name="Vaysberg M."/>
            <person name="Wallender E.K."/>
            <person name="Wong C."/>
            <person name="Yamamura Y."/>
            <person name="Yuan S."/>
            <person name="Shinozaki K."/>
            <person name="Davis R.W."/>
            <person name="Theologis A."/>
            <person name="Ecker J.R."/>
        </authorList>
    </citation>
    <scope>NUCLEOTIDE SEQUENCE [LARGE SCALE MRNA]</scope>
    <source>
        <strain>cv. Columbia</strain>
    </source>
</reference>
<reference key="4">
    <citation type="submission" date="2002-03" db="EMBL/GenBank/DDBJ databases">
        <title>Full-length cDNA from Arabidopsis thaliana.</title>
        <authorList>
            <person name="Brover V.V."/>
            <person name="Troukhan M.E."/>
            <person name="Alexandrov N.A."/>
            <person name="Lu Y.-P."/>
            <person name="Flavell R.B."/>
            <person name="Feldmann K.A."/>
        </authorList>
    </citation>
    <scope>NUCLEOTIDE SEQUENCE [LARGE SCALE MRNA]</scope>
</reference>
<reference key="5">
    <citation type="journal article" date="2009" name="DNA Res.">
        <title>Analysis of multiple occurrences of alternative splicing events in Arabidopsis thaliana using novel sequenced full-length cDNAs.</title>
        <authorList>
            <person name="Iida K."/>
            <person name="Fukami-Kobayashi K."/>
            <person name="Toyoda A."/>
            <person name="Sakaki Y."/>
            <person name="Kobayashi M."/>
            <person name="Seki M."/>
            <person name="Shinozaki K."/>
        </authorList>
    </citation>
    <scope>NUCLEOTIDE SEQUENCE [LARGE SCALE MRNA] OF 1-187</scope>
    <source>
        <strain>cv. Columbia</strain>
    </source>
</reference>
<organism>
    <name type="scientific">Arabidopsis thaliana</name>
    <name type="common">Mouse-ear cress</name>
    <dbReference type="NCBI Taxonomy" id="3702"/>
    <lineage>
        <taxon>Eukaryota</taxon>
        <taxon>Viridiplantae</taxon>
        <taxon>Streptophyta</taxon>
        <taxon>Embryophyta</taxon>
        <taxon>Tracheophyta</taxon>
        <taxon>Spermatophyta</taxon>
        <taxon>Magnoliopsida</taxon>
        <taxon>eudicotyledons</taxon>
        <taxon>Gunneridae</taxon>
        <taxon>Pentapetalae</taxon>
        <taxon>rosids</taxon>
        <taxon>malvids</taxon>
        <taxon>Brassicales</taxon>
        <taxon>Brassicaceae</taxon>
        <taxon>Camelineae</taxon>
        <taxon>Arabidopsis</taxon>
    </lineage>
</organism>
<comment type="subcellular location">
    <subcellularLocation>
        <location evidence="2">Membrane</location>
        <topology evidence="2">Multi-pass membrane protein</topology>
    </subcellularLocation>
</comment>
<comment type="similarity">
    <text evidence="2">Belongs to the GDT1 family.</text>
</comment>
<comment type="sequence caution" evidence="2">
    <conflict type="erroneous gene model prediction">
        <sequence resource="EMBL-CDS" id="BAB09369"/>
    </conflict>
</comment>